<sequence>MGLNFREKAWILLGILCCSSLICSVKAIVTYDRKAVIINGQRRILLSGSIHYPRSTPEMWPDLIQKAKDGGLDVIQTYVFWNGHEPSPGQYYFEDRYDLVKFIKVVQQAGLYVHLRIGPYVCAEWNFGGFPVWLKYVPGMVFRTDNEPFKAAMQKFTEKIVRMMKEEKLFETQGGPIILSQIENEYGPIEWEIGAPGKAYTKWVAEMAQGLSTGVPWIMCKQDDAPNSIINTCNGFYCENFKPNSDNKPKMWTENWTGWFTEFGGAVPYRPAEDIALSVARFIQNGGSFINYYMYHGGTNFDRTAGEFIATSYDYDAPLDEYGLPREPKYSHLKRLHKVIKLCEPALVSADPTVTSLGDKQEAHVFKSKSSCAAFLSNYNTSSAARVLFGGSTYDLPPWSVSILPDCKTEYYNTAKVQVRTSSIHMKMVPTNTPFSWGSYNEEIPSANDNGTFSQDGLVEQISITRDKTDYFWYLTDITISPDEKFLTGEDPLLTIGSAGHALHVFVNGQLAGTAYGSLEKPKLTFSQKIKLHAGVNKLALLSTAAGLPNVGVHYETWNTGVLGPVTLNGVNSGTWDMTKWKWSYKIGTKGEALSVHTLAGSSTVEWKEGSLVAKKQPLTWYKSTFDSPTGNEPLALDMNTMGKGQMWINGQNIGRHWPAYTARGKCERCSYAGTFTEKKCLSNCGEASQRWYHVPRSWLKPTNNLVIVLEEWGGEPNGISLVKRTAK</sequence>
<accession>Q9SCV0</accession>
<accession>Q8LPL0</accession>
<accession>Q9SZI5</accession>
<proteinExistence type="evidence at transcript level"/>
<name>BGA12_ARATH</name>
<organism>
    <name type="scientific">Arabidopsis thaliana</name>
    <name type="common">Mouse-ear cress</name>
    <dbReference type="NCBI Taxonomy" id="3702"/>
    <lineage>
        <taxon>Eukaryota</taxon>
        <taxon>Viridiplantae</taxon>
        <taxon>Streptophyta</taxon>
        <taxon>Embryophyta</taxon>
        <taxon>Tracheophyta</taxon>
        <taxon>Spermatophyta</taxon>
        <taxon>Magnoliopsida</taxon>
        <taxon>eudicotyledons</taxon>
        <taxon>Gunneridae</taxon>
        <taxon>Pentapetalae</taxon>
        <taxon>rosids</taxon>
        <taxon>malvids</taxon>
        <taxon>Brassicales</taxon>
        <taxon>Brassicaceae</taxon>
        <taxon>Camelineae</taxon>
        <taxon>Arabidopsis</taxon>
    </lineage>
</organism>
<comment type="catalytic activity">
    <reaction>
        <text>Hydrolysis of terminal non-reducing beta-D-galactose residues in beta-D-galactosides.</text>
        <dbReference type="EC" id="3.2.1.23"/>
    </reaction>
</comment>
<comment type="subcellular location">
    <subcellularLocation>
        <location evidence="4">Secreted</location>
        <location evidence="4">Extracellular space</location>
        <location evidence="4">Apoplast</location>
    </subcellularLocation>
</comment>
<comment type="alternative products">
    <event type="alternative splicing"/>
    <isoform>
        <id>Q9SCV0-1</id>
        <name>1</name>
        <sequence type="displayed"/>
    </isoform>
    <isoform>
        <id>Q9SCV0-2</id>
        <name>2</name>
        <sequence type="described" ref="VSP_026465 VSP_026466 VSP_026467"/>
    </isoform>
</comment>
<comment type="tissue specificity">
    <text evidence="2">Ubiquitous, with higher expression levels in roots and siliques.</text>
</comment>
<comment type="miscellaneous">
    <molecule>Isoform 2</molecule>
    <text evidence="4">May be due to a competing acceptor splice site and to an intron retention.</text>
</comment>
<comment type="similarity">
    <text evidence="4">Belongs to the glycosyl hydrolase 35 family.</text>
</comment>
<comment type="sequence caution" evidence="4">
    <conflict type="erroneous gene model prediction">
        <sequence resource="EMBL-CDS" id="CAB39679"/>
    </conflict>
</comment>
<comment type="sequence caution" evidence="4">
    <conflict type="erroneous gene model prediction">
        <sequence resource="EMBL-CDS" id="CAB79469"/>
    </conflict>
</comment>
<feature type="signal peptide" evidence="1">
    <location>
        <begin position="1"/>
        <end position="27"/>
    </location>
</feature>
<feature type="chain" id="PRO_5000065885" description="Beta-galactosidase 12">
    <location>
        <begin position="28"/>
        <end position="728"/>
    </location>
</feature>
<feature type="active site" description="Proton donor" evidence="1">
    <location>
        <position position="185"/>
    </location>
</feature>
<feature type="active site" description="Nucleophile" evidence="1">
    <location>
        <position position="254"/>
    </location>
</feature>
<feature type="glycosylation site" description="N-linked (GlcNAc...) asparagine" evidence="1">
    <location>
        <position position="255"/>
    </location>
</feature>
<feature type="glycosylation site" description="N-linked (GlcNAc...) asparagine" evidence="1">
    <location>
        <position position="380"/>
    </location>
</feature>
<feature type="glycosylation site" description="N-linked (GlcNAc...) asparagine" evidence="1">
    <location>
        <position position="450"/>
    </location>
</feature>
<feature type="splice variant" id="VSP_026465" description="In isoform 2." evidence="3">
    <location>
        <begin position="418"/>
        <end position="419"/>
    </location>
</feature>
<feature type="splice variant" id="VSP_026466" description="In isoform 2." evidence="3">
    <original>STFDSPTGNEPLALD</original>
    <variation>VRETEESMNHDHQQS</variation>
    <location>
        <begin position="624"/>
        <end position="638"/>
    </location>
</feature>
<feature type="splice variant" id="VSP_026467" description="In isoform 2." evidence="3">
    <location>
        <begin position="639"/>
        <end position="728"/>
    </location>
</feature>
<evidence type="ECO:0000255" key="1"/>
<evidence type="ECO:0000269" key="2">
    <source>
    </source>
</evidence>
<evidence type="ECO:0000303" key="3">
    <source>
    </source>
</evidence>
<evidence type="ECO:0000305" key="4"/>
<gene>
    <name type="primary">BGAL12</name>
    <name type="ordered locus">At4g26140</name>
    <name type="ORF">F20B18.250</name>
</gene>
<protein>
    <recommendedName>
        <fullName>Beta-galactosidase 12</fullName>
        <shortName>Lactase 12</shortName>
        <ecNumber>3.2.1.23</ecNumber>
    </recommendedName>
</protein>
<keyword id="KW-0025">Alternative splicing</keyword>
<keyword id="KW-0052">Apoplast</keyword>
<keyword id="KW-0325">Glycoprotein</keyword>
<keyword id="KW-0326">Glycosidase</keyword>
<keyword id="KW-0378">Hydrolase</keyword>
<keyword id="KW-1185">Reference proteome</keyword>
<keyword id="KW-0964">Secreted</keyword>
<keyword id="KW-0732">Signal</keyword>
<dbReference type="EC" id="3.2.1.23"/>
<dbReference type="EMBL" id="AJ270308">
    <property type="protein sequence ID" value="CAB64748.1"/>
    <property type="molecule type" value="mRNA"/>
</dbReference>
<dbReference type="EMBL" id="AL049483">
    <property type="protein sequence ID" value="CAB39679.1"/>
    <property type="status" value="ALT_SEQ"/>
    <property type="molecule type" value="Genomic_DNA"/>
</dbReference>
<dbReference type="EMBL" id="AL161564">
    <property type="protein sequence ID" value="CAB79469.1"/>
    <property type="status" value="ALT_SEQ"/>
    <property type="molecule type" value="Genomic_DNA"/>
</dbReference>
<dbReference type="EMBL" id="CP002687">
    <property type="protein sequence ID" value="AEE85162.1"/>
    <property type="molecule type" value="Genomic_DNA"/>
</dbReference>
<dbReference type="EMBL" id="CP002687">
    <property type="protein sequence ID" value="AEE85163.1"/>
    <property type="molecule type" value="Genomic_DNA"/>
</dbReference>
<dbReference type="EMBL" id="CP002687">
    <property type="protein sequence ID" value="ANM67751.1"/>
    <property type="molecule type" value="Genomic_DNA"/>
</dbReference>
<dbReference type="EMBL" id="AY099612">
    <property type="protein sequence ID" value="AAM20463.1"/>
    <property type="molecule type" value="mRNA"/>
</dbReference>
<dbReference type="EMBL" id="BT000267">
    <property type="protein sequence ID" value="AAN15586.1"/>
    <property type="molecule type" value="mRNA"/>
</dbReference>
<dbReference type="PIR" id="T04269">
    <property type="entry name" value="T04269"/>
</dbReference>
<dbReference type="RefSeq" id="NP_001329560.1">
    <molecule id="Q9SCV0-2"/>
    <property type="nucleotide sequence ID" value="NM_001341777.1"/>
</dbReference>
<dbReference type="RefSeq" id="NP_194344.2">
    <molecule id="Q9SCV0-2"/>
    <property type="nucleotide sequence ID" value="NM_118747.3"/>
</dbReference>
<dbReference type="RefSeq" id="NP_849553.1">
    <molecule id="Q9SCV0-1"/>
    <property type="nucleotide sequence ID" value="NM_179222.2"/>
</dbReference>
<dbReference type="SMR" id="Q9SCV0"/>
<dbReference type="BioGRID" id="14007">
    <property type="interactions" value="1"/>
</dbReference>
<dbReference type="FunCoup" id="Q9SCV0">
    <property type="interactions" value="18"/>
</dbReference>
<dbReference type="STRING" id="3702.Q9SCV0"/>
<dbReference type="CAZy" id="GH35">
    <property type="family name" value="Glycoside Hydrolase Family 35"/>
</dbReference>
<dbReference type="GlyCosmos" id="Q9SCV0">
    <property type="glycosylation" value="3 sites, No reported glycans"/>
</dbReference>
<dbReference type="GlyGen" id="Q9SCV0">
    <property type="glycosylation" value="3 sites"/>
</dbReference>
<dbReference type="PaxDb" id="3702-AT4G26140.1"/>
<dbReference type="ProteomicsDB" id="240758">
    <molecule id="Q9SCV0-1"/>
</dbReference>
<dbReference type="EnsemblPlants" id="AT4G26140.1">
    <molecule id="Q9SCV0-1"/>
    <property type="protein sequence ID" value="AT4G26140.1"/>
    <property type="gene ID" value="AT4G26140"/>
</dbReference>
<dbReference type="EnsemblPlants" id="AT4G26140.2">
    <molecule id="Q9SCV0-2"/>
    <property type="protein sequence ID" value="AT4G26140.2"/>
    <property type="gene ID" value="AT4G26140"/>
</dbReference>
<dbReference type="EnsemblPlants" id="AT4G26140.3">
    <molecule id="Q9SCV0-2"/>
    <property type="protein sequence ID" value="AT4G26140.3"/>
    <property type="gene ID" value="AT4G26140"/>
</dbReference>
<dbReference type="GeneID" id="828720"/>
<dbReference type="Gramene" id="AT4G26140.1">
    <molecule id="Q9SCV0-1"/>
    <property type="protein sequence ID" value="AT4G26140.1"/>
    <property type="gene ID" value="AT4G26140"/>
</dbReference>
<dbReference type="Gramene" id="AT4G26140.2">
    <molecule id="Q9SCV0-2"/>
    <property type="protein sequence ID" value="AT4G26140.2"/>
    <property type="gene ID" value="AT4G26140"/>
</dbReference>
<dbReference type="Gramene" id="AT4G26140.3">
    <molecule id="Q9SCV0-2"/>
    <property type="protein sequence ID" value="AT4G26140.3"/>
    <property type="gene ID" value="AT4G26140"/>
</dbReference>
<dbReference type="KEGG" id="ath:AT4G26140"/>
<dbReference type="Araport" id="AT4G26140"/>
<dbReference type="TAIR" id="AT4G26140">
    <property type="gene designation" value="BGAL12"/>
</dbReference>
<dbReference type="eggNOG" id="KOG0496">
    <property type="taxonomic scope" value="Eukaryota"/>
</dbReference>
<dbReference type="HOGENOM" id="CLU_007853_4_0_1"/>
<dbReference type="InParanoid" id="Q9SCV0"/>
<dbReference type="OMA" id="RGNCGNC"/>
<dbReference type="PhylomeDB" id="Q9SCV0"/>
<dbReference type="PRO" id="PR:Q9SCV0"/>
<dbReference type="Proteomes" id="UP000006548">
    <property type="component" value="Chromosome 4"/>
</dbReference>
<dbReference type="ExpressionAtlas" id="Q9SCV0">
    <property type="expression patterns" value="baseline and differential"/>
</dbReference>
<dbReference type="GO" id="GO:0048046">
    <property type="term" value="C:apoplast"/>
    <property type="evidence" value="ECO:0007669"/>
    <property type="project" value="UniProtKB-SubCell"/>
</dbReference>
<dbReference type="GO" id="GO:0005829">
    <property type="term" value="C:cytosol"/>
    <property type="evidence" value="ECO:0007005"/>
    <property type="project" value="TAIR"/>
</dbReference>
<dbReference type="GO" id="GO:0004565">
    <property type="term" value="F:beta-galactosidase activity"/>
    <property type="evidence" value="ECO:0007669"/>
    <property type="project" value="UniProtKB-EC"/>
</dbReference>
<dbReference type="GO" id="GO:0005975">
    <property type="term" value="P:carbohydrate metabolic process"/>
    <property type="evidence" value="ECO:0007669"/>
    <property type="project" value="InterPro"/>
</dbReference>
<dbReference type="FunFam" id="2.60.120.260:FF:000061">
    <property type="entry name" value="Beta-galactosidase"/>
    <property type="match status" value="1"/>
</dbReference>
<dbReference type="FunFam" id="2.60.120.260:FF:000076">
    <property type="entry name" value="Beta-galactosidase"/>
    <property type="match status" value="1"/>
</dbReference>
<dbReference type="FunFam" id="2.60.120.260:FF:000142">
    <property type="entry name" value="Beta-galactosidase"/>
    <property type="match status" value="1"/>
</dbReference>
<dbReference type="FunFam" id="3.20.20.80:FF:000021">
    <property type="entry name" value="Beta-galactosidase"/>
    <property type="match status" value="1"/>
</dbReference>
<dbReference type="Gene3D" id="2.60.120.260">
    <property type="entry name" value="Galactose-binding domain-like"/>
    <property type="match status" value="2"/>
</dbReference>
<dbReference type="Gene3D" id="3.20.20.80">
    <property type="entry name" value="Glycosidases"/>
    <property type="match status" value="1"/>
</dbReference>
<dbReference type="InterPro" id="IPR048913">
    <property type="entry name" value="BetaGal_gal-bd"/>
</dbReference>
<dbReference type="InterPro" id="IPR008979">
    <property type="entry name" value="Galactose-bd-like_sf"/>
</dbReference>
<dbReference type="InterPro" id="IPR041392">
    <property type="entry name" value="GHD"/>
</dbReference>
<dbReference type="InterPro" id="IPR031330">
    <property type="entry name" value="Gly_Hdrlase_35_cat"/>
</dbReference>
<dbReference type="InterPro" id="IPR019801">
    <property type="entry name" value="Glyco_hydro_35_CS"/>
</dbReference>
<dbReference type="InterPro" id="IPR001944">
    <property type="entry name" value="Glycoside_Hdrlase_35"/>
</dbReference>
<dbReference type="InterPro" id="IPR017853">
    <property type="entry name" value="Glycoside_hydrolase_SF"/>
</dbReference>
<dbReference type="PANTHER" id="PTHR23421">
    <property type="entry name" value="BETA-GALACTOSIDASE RELATED"/>
    <property type="match status" value="1"/>
</dbReference>
<dbReference type="Pfam" id="PF21467">
    <property type="entry name" value="BetaGal_gal-bd"/>
    <property type="match status" value="2"/>
</dbReference>
<dbReference type="Pfam" id="PF17834">
    <property type="entry name" value="GHD"/>
    <property type="match status" value="1"/>
</dbReference>
<dbReference type="Pfam" id="PF01301">
    <property type="entry name" value="Glyco_hydro_35"/>
    <property type="match status" value="1"/>
</dbReference>
<dbReference type="PRINTS" id="PR00742">
    <property type="entry name" value="GLHYDRLASE35"/>
</dbReference>
<dbReference type="SUPFAM" id="SSF51445">
    <property type="entry name" value="(Trans)glycosidases"/>
    <property type="match status" value="1"/>
</dbReference>
<dbReference type="SUPFAM" id="SSF49785">
    <property type="entry name" value="Galactose-binding domain-like"/>
    <property type="match status" value="2"/>
</dbReference>
<dbReference type="PROSITE" id="PS01182">
    <property type="entry name" value="GLYCOSYL_HYDROL_F35"/>
    <property type="match status" value="1"/>
</dbReference>
<reference key="1">
    <citation type="submission" date="1999-10" db="EMBL/GenBank/DDBJ databases">
        <title>The beta-galactosidases are encoding by a multigene family in Arabidopsis thaliana.</title>
        <authorList>
            <person name="Gy I."/>
            <person name="Kreis M."/>
            <person name="Lecharny A."/>
        </authorList>
    </citation>
    <scope>NUCLEOTIDE SEQUENCE [MRNA] (ISOFORM 1)</scope>
</reference>
<reference key="2">
    <citation type="journal article" date="1999" name="Nature">
        <title>Sequence and analysis of chromosome 4 of the plant Arabidopsis thaliana.</title>
        <authorList>
            <person name="Mayer K.F.X."/>
            <person name="Schueller C."/>
            <person name="Wambutt R."/>
            <person name="Murphy G."/>
            <person name="Volckaert G."/>
            <person name="Pohl T."/>
            <person name="Duesterhoeft A."/>
            <person name="Stiekema W."/>
            <person name="Entian K.-D."/>
            <person name="Terryn N."/>
            <person name="Harris B."/>
            <person name="Ansorge W."/>
            <person name="Brandt P."/>
            <person name="Grivell L.A."/>
            <person name="Rieger M."/>
            <person name="Weichselgartner M."/>
            <person name="de Simone V."/>
            <person name="Obermaier B."/>
            <person name="Mache R."/>
            <person name="Mueller M."/>
            <person name="Kreis M."/>
            <person name="Delseny M."/>
            <person name="Puigdomenech P."/>
            <person name="Watson M."/>
            <person name="Schmidtheini T."/>
            <person name="Reichert B."/>
            <person name="Portetelle D."/>
            <person name="Perez-Alonso M."/>
            <person name="Boutry M."/>
            <person name="Bancroft I."/>
            <person name="Vos P."/>
            <person name="Hoheisel J."/>
            <person name="Zimmermann W."/>
            <person name="Wedler H."/>
            <person name="Ridley P."/>
            <person name="Langham S.-A."/>
            <person name="McCullagh B."/>
            <person name="Bilham L."/>
            <person name="Robben J."/>
            <person name="van der Schueren J."/>
            <person name="Grymonprez B."/>
            <person name="Chuang Y.-J."/>
            <person name="Vandenbussche F."/>
            <person name="Braeken M."/>
            <person name="Weltjens I."/>
            <person name="Voet M."/>
            <person name="Bastiaens I."/>
            <person name="Aert R."/>
            <person name="Defoor E."/>
            <person name="Weitzenegger T."/>
            <person name="Bothe G."/>
            <person name="Ramsperger U."/>
            <person name="Hilbert H."/>
            <person name="Braun M."/>
            <person name="Holzer E."/>
            <person name="Brandt A."/>
            <person name="Peters S."/>
            <person name="van Staveren M."/>
            <person name="Dirkse W."/>
            <person name="Mooijman P."/>
            <person name="Klein Lankhorst R."/>
            <person name="Rose M."/>
            <person name="Hauf J."/>
            <person name="Koetter P."/>
            <person name="Berneiser S."/>
            <person name="Hempel S."/>
            <person name="Feldpausch M."/>
            <person name="Lamberth S."/>
            <person name="Van den Daele H."/>
            <person name="De Keyser A."/>
            <person name="Buysshaert C."/>
            <person name="Gielen J."/>
            <person name="Villarroel R."/>
            <person name="De Clercq R."/>
            <person name="van Montagu M."/>
            <person name="Rogers J."/>
            <person name="Cronin A."/>
            <person name="Quail M.A."/>
            <person name="Bray-Allen S."/>
            <person name="Clark L."/>
            <person name="Doggett J."/>
            <person name="Hall S."/>
            <person name="Kay M."/>
            <person name="Lennard N."/>
            <person name="McLay K."/>
            <person name="Mayes R."/>
            <person name="Pettett A."/>
            <person name="Rajandream M.A."/>
            <person name="Lyne M."/>
            <person name="Benes V."/>
            <person name="Rechmann S."/>
            <person name="Borkova D."/>
            <person name="Bloecker H."/>
            <person name="Scharfe M."/>
            <person name="Grimm M."/>
            <person name="Loehnert T.-H."/>
            <person name="Dose S."/>
            <person name="de Haan M."/>
            <person name="Maarse A.C."/>
            <person name="Schaefer M."/>
            <person name="Mueller-Auer S."/>
            <person name="Gabel C."/>
            <person name="Fuchs M."/>
            <person name="Fartmann B."/>
            <person name="Granderath K."/>
            <person name="Dauner D."/>
            <person name="Herzl A."/>
            <person name="Neumann S."/>
            <person name="Argiriou A."/>
            <person name="Vitale D."/>
            <person name="Liguori R."/>
            <person name="Piravandi E."/>
            <person name="Massenet O."/>
            <person name="Quigley F."/>
            <person name="Clabauld G."/>
            <person name="Muendlein A."/>
            <person name="Felber R."/>
            <person name="Schnabl S."/>
            <person name="Hiller R."/>
            <person name="Schmidt W."/>
            <person name="Lecharny A."/>
            <person name="Aubourg S."/>
            <person name="Chefdor F."/>
            <person name="Cooke R."/>
            <person name="Berger C."/>
            <person name="Monfort A."/>
            <person name="Casacuberta E."/>
            <person name="Gibbons T."/>
            <person name="Weber N."/>
            <person name="Vandenbol M."/>
            <person name="Bargues M."/>
            <person name="Terol J."/>
            <person name="Torres A."/>
            <person name="Perez-Perez A."/>
            <person name="Purnelle B."/>
            <person name="Bent E."/>
            <person name="Johnson S."/>
            <person name="Tacon D."/>
            <person name="Jesse T."/>
            <person name="Heijnen L."/>
            <person name="Schwarz S."/>
            <person name="Scholler P."/>
            <person name="Heber S."/>
            <person name="Francs P."/>
            <person name="Bielke C."/>
            <person name="Frishman D."/>
            <person name="Haase D."/>
            <person name="Lemcke K."/>
            <person name="Mewes H.-W."/>
            <person name="Stocker S."/>
            <person name="Zaccaria P."/>
            <person name="Bevan M."/>
            <person name="Wilson R.K."/>
            <person name="de la Bastide M."/>
            <person name="Habermann K."/>
            <person name="Parnell L."/>
            <person name="Dedhia N."/>
            <person name="Gnoj L."/>
            <person name="Schutz K."/>
            <person name="Huang E."/>
            <person name="Spiegel L."/>
            <person name="Sekhon M."/>
            <person name="Murray J."/>
            <person name="Sheet P."/>
            <person name="Cordes M."/>
            <person name="Abu-Threideh J."/>
            <person name="Stoneking T."/>
            <person name="Kalicki J."/>
            <person name="Graves T."/>
            <person name="Harmon G."/>
            <person name="Edwards J."/>
            <person name="Latreille P."/>
            <person name="Courtney L."/>
            <person name="Cloud J."/>
            <person name="Abbott A."/>
            <person name="Scott K."/>
            <person name="Johnson D."/>
            <person name="Minx P."/>
            <person name="Bentley D."/>
            <person name="Fulton B."/>
            <person name="Miller N."/>
            <person name="Greco T."/>
            <person name="Kemp K."/>
            <person name="Kramer J."/>
            <person name="Fulton L."/>
            <person name="Mardis E."/>
            <person name="Dante M."/>
            <person name="Pepin K."/>
            <person name="Hillier L.W."/>
            <person name="Nelson J."/>
            <person name="Spieth J."/>
            <person name="Ryan E."/>
            <person name="Andrews S."/>
            <person name="Geisel C."/>
            <person name="Layman D."/>
            <person name="Du H."/>
            <person name="Ali J."/>
            <person name="Berghoff A."/>
            <person name="Jones K."/>
            <person name="Drone K."/>
            <person name="Cotton M."/>
            <person name="Joshu C."/>
            <person name="Antonoiu B."/>
            <person name="Zidanic M."/>
            <person name="Strong C."/>
            <person name="Sun H."/>
            <person name="Lamar B."/>
            <person name="Yordan C."/>
            <person name="Ma P."/>
            <person name="Zhong J."/>
            <person name="Preston R."/>
            <person name="Vil D."/>
            <person name="Shekher M."/>
            <person name="Matero A."/>
            <person name="Shah R."/>
            <person name="Swaby I.K."/>
            <person name="O'Shaughnessy A."/>
            <person name="Rodriguez M."/>
            <person name="Hoffman J."/>
            <person name="Till S."/>
            <person name="Granat S."/>
            <person name="Shohdy N."/>
            <person name="Hasegawa A."/>
            <person name="Hameed A."/>
            <person name="Lodhi M."/>
            <person name="Johnson A."/>
            <person name="Chen E."/>
            <person name="Marra M.A."/>
            <person name="Martienssen R."/>
            <person name="McCombie W.R."/>
        </authorList>
    </citation>
    <scope>NUCLEOTIDE SEQUENCE [LARGE SCALE GENOMIC DNA]</scope>
    <source>
        <strain>cv. Columbia</strain>
    </source>
</reference>
<reference key="3">
    <citation type="journal article" date="2017" name="Plant J.">
        <title>Araport11: a complete reannotation of the Arabidopsis thaliana reference genome.</title>
        <authorList>
            <person name="Cheng C.Y."/>
            <person name="Krishnakumar V."/>
            <person name="Chan A.P."/>
            <person name="Thibaud-Nissen F."/>
            <person name="Schobel S."/>
            <person name="Town C.D."/>
        </authorList>
    </citation>
    <scope>GENOME REANNOTATION</scope>
    <source>
        <strain>cv. Columbia</strain>
    </source>
</reference>
<reference key="4">
    <citation type="journal article" date="2003" name="Science">
        <title>Empirical analysis of transcriptional activity in the Arabidopsis genome.</title>
        <authorList>
            <person name="Yamada K."/>
            <person name="Lim J."/>
            <person name="Dale J.M."/>
            <person name="Chen H."/>
            <person name="Shinn P."/>
            <person name="Palm C.J."/>
            <person name="Southwick A.M."/>
            <person name="Wu H.C."/>
            <person name="Kim C.J."/>
            <person name="Nguyen M."/>
            <person name="Pham P.K."/>
            <person name="Cheuk R.F."/>
            <person name="Karlin-Newmann G."/>
            <person name="Liu S.X."/>
            <person name="Lam B."/>
            <person name="Sakano H."/>
            <person name="Wu T."/>
            <person name="Yu G."/>
            <person name="Miranda M."/>
            <person name="Quach H.L."/>
            <person name="Tripp M."/>
            <person name="Chang C.H."/>
            <person name="Lee J.M."/>
            <person name="Toriumi M.J."/>
            <person name="Chan M.M."/>
            <person name="Tang C.C."/>
            <person name="Onodera C.S."/>
            <person name="Deng J.M."/>
            <person name="Akiyama K."/>
            <person name="Ansari Y."/>
            <person name="Arakawa T."/>
            <person name="Banh J."/>
            <person name="Banno F."/>
            <person name="Bowser L."/>
            <person name="Brooks S.Y."/>
            <person name="Carninci P."/>
            <person name="Chao Q."/>
            <person name="Choy N."/>
            <person name="Enju A."/>
            <person name="Goldsmith A.D."/>
            <person name="Gurjal M."/>
            <person name="Hansen N.F."/>
            <person name="Hayashizaki Y."/>
            <person name="Johnson-Hopson C."/>
            <person name="Hsuan V.W."/>
            <person name="Iida K."/>
            <person name="Karnes M."/>
            <person name="Khan S."/>
            <person name="Koesema E."/>
            <person name="Ishida J."/>
            <person name="Jiang P.X."/>
            <person name="Jones T."/>
            <person name="Kawai J."/>
            <person name="Kamiya A."/>
            <person name="Meyers C."/>
            <person name="Nakajima M."/>
            <person name="Narusaka M."/>
            <person name="Seki M."/>
            <person name="Sakurai T."/>
            <person name="Satou M."/>
            <person name="Tamse R."/>
            <person name="Vaysberg M."/>
            <person name="Wallender E.K."/>
            <person name="Wong C."/>
            <person name="Yamamura Y."/>
            <person name="Yuan S."/>
            <person name="Shinozaki K."/>
            <person name="Davis R.W."/>
            <person name="Theologis A."/>
            <person name="Ecker J.R."/>
        </authorList>
    </citation>
    <scope>NUCLEOTIDE SEQUENCE [LARGE SCALE MRNA] (ISOFORM 2)</scope>
    <source>
        <strain>cv. Columbia</strain>
    </source>
</reference>
<reference key="5">
    <citation type="journal article" date="2006" name="Plant Cell Physiol.">
        <title>Apoplastic glycosidases active against xyloglucan oligosaccharides of Arabidopsis thaliana.</title>
        <authorList>
            <person name="Iglesias N."/>
            <person name="Abelenda J.A."/>
            <person name="Rodino M."/>
            <person name="Sampedro J."/>
            <person name="Revilla G."/>
            <person name="Zarra I."/>
        </authorList>
    </citation>
    <scope>TISSUE SPECIFICITY</scope>
</reference>
<reference key="6">
    <citation type="journal article" date="2007" name="Phytochemistry">
        <title>Functional genomic analysis of Arabidopsis thaliana glycoside hydrolase family 35.</title>
        <authorList>
            <person name="Ahn Y.O."/>
            <person name="Zheng M."/>
            <person name="Bevan D.R."/>
            <person name="Esen A."/>
            <person name="Shiu S.-H."/>
            <person name="Benson J."/>
            <person name="Peng H.-P."/>
            <person name="Miller J.T."/>
            <person name="Cheng C.-L."/>
            <person name="Poulton J.E."/>
            <person name="Shih M.-C."/>
        </authorList>
    </citation>
    <scope>GENE FAMILY</scope>
    <scope>NOMENCLATURE</scope>
</reference>